<keyword id="KW-1015">Disulfide bond</keyword>
<keyword id="KW-0872">Ion channel impairing toxin</keyword>
<keyword id="KW-0528">Neurotoxin</keyword>
<keyword id="KW-0632">Potassium channel impairing toxin</keyword>
<keyword id="KW-0964">Secreted</keyword>
<keyword id="KW-0732">Signal</keyword>
<keyword id="KW-0800">Toxin</keyword>
<reference key="1">
    <citation type="journal article" date="2011" name="Toxicon">
        <title>The tale of a resting gland: transcriptome of a replete venom gland from the scorpion Hottentotta judaicus.</title>
        <authorList>
            <person name="Morgenstern D."/>
            <person name="Rohde B.H."/>
            <person name="King G.F."/>
            <person name="Tal T."/>
            <person name="Sher D."/>
            <person name="Zlotkin E."/>
        </authorList>
    </citation>
    <scope>NUCLEOTIDE SEQUENCE [MRNA]</scope>
    <source>
        <tissue>Telson</tissue>
    </source>
</reference>
<reference key="2">
    <citation type="journal article" date="2012" name="Peptides">
        <title>Identification and molecular characterization of three new K(+)-channel specific toxins from the Chinese scorpion Mesobuthus martensii Karsch revealing intronic number polymorphism and alternative splicing in duplicated genes.</title>
        <authorList>
            <person name="Zeng X.C."/>
            <person name="Zhang L."/>
            <person name="Nie Y."/>
            <person name="Luo X."/>
        </authorList>
    </citation>
    <scope>NOMENCLATURE</scope>
</reference>
<comment type="function">
    <text evidence="1">May block potassium channels.</text>
</comment>
<comment type="subcellular location">
    <subcellularLocation>
        <location evidence="1">Secreted</location>
    </subcellularLocation>
</comment>
<comment type="tissue specificity">
    <text>Expressed by the venom gland.</text>
</comment>
<comment type="domain">
    <text evidence="3">Has the structural arrangement of an alpha-helix connected to antiparallel beta-sheets by disulfide bonds (CS-alpha/beta).</text>
</comment>
<comment type="similarity">
    <text evidence="3">Belongs to the short scorpion toxin superfamily. Potassium channel inhibitor family. Alpha-KTx 23 subfamily.</text>
</comment>
<comment type="caution">
    <text evidence="3">Has been classified as a the potassium channel toxin alpha-KTx 22.2 in PubMed:22230549. Since the subfamily 22 has already been attributed, this peptide should be reclassified as alpha-KTx 23.2.</text>
</comment>
<sequence>MQKIFIILVLFCILKFNVDVEGRIASQCDLSACKERCEKQNKNGKCVIETEMDLVYRLCKCY</sequence>
<name>KA23H_HOTJU</name>
<feature type="signal peptide" evidence="2">
    <location>
        <begin position="1"/>
        <end position="22"/>
    </location>
</feature>
<feature type="chain" id="PRO_0000417437" description="U10-buthitoxin-Hj1a">
    <location>
        <begin position="23"/>
        <end position="62"/>
    </location>
</feature>
<feature type="site" description="Basic residue of the functional dyad" evidence="1">
    <location>
        <position position="45"/>
    </location>
</feature>
<feature type="site" description="Aromatic residue of the functional dyad" evidence="1">
    <location>
        <position position="62"/>
    </location>
</feature>
<feature type="disulfide bond" evidence="2">
    <location>
        <begin position="28"/>
        <end position="46"/>
    </location>
</feature>
<feature type="disulfide bond" evidence="2">
    <location>
        <begin position="33"/>
        <end position="59"/>
    </location>
</feature>
<feature type="disulfide bond" evidence="2">
    <location>
        <begin position="37"/>
        <end position="61"/>
    </location>
</feature>
<evidence type="ECO:0000250" key="1"/>
<evidence type="ECO:0000255" key="2"/>
<evidence type="ECO:0000305" key="3"/>
<evidence type="ECO:0000312" key="4">
    <source>
        <dbReference type="EMBL" id="ADY39520.1"/>
    </source>
</evidence>
<organism>
    <name type="scientific">Hottentotta judaicus</name>
    <name type="common">Black scorpion</name>
    <name type="synonym">Buthotus judaicus</name>
    <dbReference type="NCBI Taxonomy" id="6863"/>
    <lineage>
        <taxon>Eukaryota</taxon>
        <taxon>Metazoa</taxon>
        <taxon>Ecdysozoa</taxon>
        <taxon>Arthropoda</taxon>
        <taxon>Chelicerata</taxon>
        <taxon>Arachnida</taxon>
        <taxon>Scorpiones</taxon>
        <taxon>Buthida</taxon>
        <taxon>Buthoidea</taxon>
        <taxon>Buthidae</taxon>
        <taxon>Hottentotta</taxon>
    </lineage>
</organism>
<protein>
    <recommendedName>
        <fullName evidence="4">U10-buthitoxin-Hj1a</fullName>
        <shortName evidence="3">U10-BUTX-Hj1a</shortName>
    </recommendedName>
</protein>
<accession>F1CIY9</accession>
<dbReference type="EMBL" id="HQ288095">
    <property type="protein sequence ID" value="ADY39520.1"/>
    <property type="molecule type" value="mRNA"/>
</dbReference>
<dbReference type="SMR" id="F1CIY9"/>
<dbReference type="GO" id="GO:0005576">
    <property type="term" value="C:extracellular region"/>
    <property type="evidence" value="ECO:0007669"/>
    <property type="project" value="UniProtKB-SubCell"/>
</dbReference>
<dbReference type="GO" id="GO:0015459">
    <property type="term" value="F:potassium channel regulator activity"/>
    <property type="evidence" value="ECO:0007669"/>
    <property type="project" value="UniProtKB-KW"/>
</dbReference>
<dbReference type="GO" id="GO:0090729">
    <property type="term" value="F:toxin activity"/>
    <property type="evidence" value="ECO:0007669"/>
    <property type="project" value="UniProtKB-KW"/>
</dbReference>
<proteinExistence type="evidence at transcript level"/>